<accession>Q14FE3</accession>
<protein>
    <recommendedName>
        <fullName evidence="1">Photosystem II reaction center protein J</fullName>
        <shortName evidence="1">PSII-J</shortName>
    </recommendedName>
</protein>
<evidence type="ECO:0000255" key="1">
    <source>
        <dbReference type="HAMAP-Rule" id="MF_01305"/>
    </source>
</evidence>
<organism>
    <name type="scientific">Populus alba</name>
    <name type="common">White poplar</name>
    <dbReference type="NCBI Taxonomy" id="43335"/>
    <lineage>
        <taxon>Eukaryota</taxon>
        <taxon>Viridiplantae</taxon>
        <taxon>Streptophyta</taxon>
        <taxon>Embryophyta</taxon>
        <taxon>Tracheophyta</taxon>
        <taxon>Spermatophyta</taxon>
        <taxon>Magnoliopsida</taxon>
        <taxon>eudicotyledons</taxon>
        <taxon>Gunneridae</taxon>
        <taxon>Pentapetalae</taxon>
        <taxon>rosids</taxon>
        <taxon>fabids</taxon>
        <taxon>Malpighiales</taxon>
        <taxon>Salicaceae</taxon>
        <taxon>Saliceae</taxon>
        <taxon>Populus</taxon>
    </lineage>
</organism>
<feature type="chain" id="PRO_0000276110" description="Photosystem II reaction center protein J">
    <location>
        <begin position="1"/>
        <end position="40"/>
    </location>
</feature>
<feature type="transmembrane region" description="Helical" evidence="1">
    <location>
        <begin position="8"/>
        <end position="28"/>
    </location>
</feature>
<reference key="1">
    <citation type="submission" date="2005-03" db="EMBL/GenBank/DDBJ databases">
        <title>Complete structure of the chloroplast genome of Populus alba.</title>
        <authorList>
            <person name="Okumura S."/>
            <person name="Yamashita A."/>
            <person name="Kanamoto H."/>
            <person name="Hattori M."/>
            <person name="Takase H."/>
            <person name="Tomizawa K."/>
        </authorList>
    </citation>
    <scope>NUCLEOTIDE SEQUENCE [LARGE SCALE GENOMIC DNA]</scope>
</reference>
<comment type="function">
    <text evidence="1">One of the components of the core complex of photosystem II (PSII). PSII is a light-driven water:plastoquinone oxidoreductase that uses light energy to abstract electrons from H(2)O, generating O(2) and a proton gradient subsequently used for ATP formation. It consists of a core antenna complex that captures photons, and an electron transfer chain that converts photonic excitation into a charge separation.</text>
</comment>
<comment type="subunit">
    <text evidence="1">PSII is composed of 1 copy each of membrane proteins PsbA, PsbB, PsbC, PsbD, PsbE, PsbF, PsbH, PsbI, PsbJ, PsbK, PsbL, PsbM, PsbT, PsbX, PsbY, PsbZ, Psb30/Ycf12, at least 3 peripheral proteins of the oxygen-evolving complex and a large number of cofactors. It forms dimeric complexes.</text>
</comment>
<comment type="subcellular location">
    <subcellularLocation>
        <location evidence="1">Plastid</location>
        <location evidence="1">Chloroplast thylakoid membrane</location>
        <topology evidence="1">Single-pass membrane protein</topology>
    </subcellularLocation>
</comment>
<comment type="similarity">
    <text evidence="1">Belongs to the PsbJ family.</text>
</comment>
<gene>
    <name evidence="1" type="primary">psbJ</name>
</gene>
<sequence>MADTTGRIPLWIIGTVTGIPVIGLIGIFFYGSYSGLGSSL</sequence>
<dbReference type="EMBL" id="AP008956">
    <property type="protein sequence ID" value="BAE97219.1"/>
    <property type="molecule type" value="Genomic_DNA"/>
</dbReference>
<dbReference type="RefSeq" id="YP_665572.1">
    <property type="nucleotide sequence ID" value="NC_008235.1"/>
</dbReference>
<dbReference type="SMR" id="Q14FE3"/>
<dbReference type="GeneID" id="4178166"/>
<dbReference type="KEGG" id="palz:4178166"/>
<dbReference type="GO" id="GO:0009535">
    <property type="term" value="C:chloroplast thylakoid membrane"/>
    <property type="evidence" value="ECO:0007669"/>
    <property type="project" value="UniProtKB-SubCell"/>
</dbReference>
<dbReference type="GO" id="GO:0009539">
    <property type="term" value="C:photosystem II reaction center"/>
    <property type="evidence" value="ECO:0007669"/>
    <property type="project" value="InterPro"/>
</dbReference>
<dbReference type="GO" id="GO:0015979">
    <property type="term" value="P:photosynthesis"/>
    <property type="evidence" value="ECO:0007669"/>
    <property type="project" value="UniProtKB-UniRule"/>
</dbReference>
<dbReference type="Gene3D" id="6.10.250.2070">
    <property type="match status" value="1"/>
</dbReference>
<dbReference type="HAMAP" id="MF_01305">
    <property type="entry name" value="PSII_PsbJ"/>
    <property type="match status" value="1"/>
</dbReference>
<dbReference type="InterPro" id="IPR002682">
    <property type="entry name" value="PSII_PsbJ"/>
</dbReference>
<dbReference type="InterPro" id="IPR037267">
    <property type="entry name" value="PSII_PsbJ_sf"/>
</dbReference>
<dbReference type="NCBIfam" id="NF002722">
    <property type="entry name" value="PRK02565.1"/>
    <property type="match status" value="1"/>
</dbReference>
<dbReference type="PANTHER" id="PTHR34812">
    <property type="entry name" value="PHOTOSYSTEM II REACTION CENTER PROTEIN J"/>
    <property type="match status" value="1"/>
</dbReference>
<dbReference type="PANTHER" id="PTHR34812:SF3">
    <property type="entry name" value="PHOTOSYSTEM II REACTION CENTER PROTEIN J"/>
    <property type="match status" value="1"/>
</dbReference>
<dbReference type="Pfam" id="PF01788">
    <property type="entry name" value="PsbJ"/>
    <property type="match status" value="1"/>
</dbReference>
<dbReference type="SUPFAM" id="SSF161021">
    <property type="entry name" value="Photosystem II reaction center protein J, PsbJ"/>
    <property type="match status" value="1"/>
</dbReference>
<keyword id="KW-0150">Chloroplast</keyword>
<keyword id="KW-0472">Membrane</keyword>
<keyword id="KW-0602">Photosynthesis</keyword>
<keyword id="KW-0604">Photosystem II</keyword>
<keyword id="KW-0934">Plastid</keyword>
<keyword id="KW-0674">Reaction center</keyword>
<keyword id="KW-0793">Thylakoid</keyword>
<keyword id="KW-0812">Transmembrane</keyword>
<keyword id="KW-1133">Transmembrane helix</keyword>
<proteinExistence type="inferred from homology"/>
<geneLocation type="chloroplast"/>
<name>PSBJ_POPAL</name>